<reference key="1">
    <citation type="journal article" date="2005" name="Infect. Immun.">
        <title>Comparative genomic analysis of Chlamydia trachomatis oculotropic and genitotropic strains.</title>
        <authorList>
            <person name="Carlson J.H."/>
            <person name="Porcella S.F."/>
            <person name="McClarty G."/>
            <person name="Caldwell H.D."/>
        </authorList>
    </citation>
    <scope>NUCLEOTIDE SEQUENCE [LARGE SCALE GENOMIC DNA]</scope>
    <source>
        <strain>ATCC VR-571B / DSM 19440 / HAR-13</strain>
    </source>
</reference>
<protein>
    <recommendedName>
        <fullName evidence="1">Chaperone protein DnaK</fullName>
    </recommendedName>
    <alternativeName>
        <fullName evidence="1">HSP70</fullName>
    </alternativeName>
    <alternativeName>
        <fullName evidence="1">Heat shock 70 kDa protein</fullName>
    </alternativeName>
    <alternativeName>
        <fullName evidence="1">Heat shock protein 70</fullName>
    </alternativeName>
</protein>
<evidence type="ECO:0000255" key="1">
    <source>
        <dbReference type="HAMAP-Rule" id="MF_00332"/>
    </source>
</evidence>
<evidence type="ECO:0000256" key="2">
    <source>
        <dbReference type="SAM" id="MobiDB-lite"/>
    </source>
</evidence>
<keyword id="KW-0067">ATP-binding</keyword>
<keyword id="KW-0143">Chaperone</keyword>
<keyword id="KW-0547">Nucleotide-binding</keyword>
<keyword id="KW-0597">Phosphoprotein</keyword>
<keyword id="KW-0346">Stress response</keyword>
<name>DNAK_CHLTA</name>
<gene>
    <name evidence="1" type="primary">dnaK</name>
    <name type="ordered locus">CTA_0431</name>
</gene>
<feature type="chain" id="PRO_0000225949" description="Chaperone protein DnaK">
    <location>
        <begin position="1"/>
        <end position="660"/>
    </location>
</feature>
<feature type="region of interest" description="Disordered" evidence="2">
    <location>
        <begin position="599"/>
        <end position="660"/>
    </location>
</feature>
<feature type="compositionally biased region" description="Low complexity" evidence="2">
    <location>
        <begin position="600"/>
        <end position="617"/>
    </location>
</feature>
<feature type="modified residue" description="Phosphothreonine; by autocatalysis" evidence="1">
    <location>
        <position position="201"/>
    </location>
</feature>
<dbReference type="EMBL" id="CP000051">
    <property type="protein sequence ID" value="AAX50665.1"/>
    <property type="molecule type" value="Genomic_DNA"/>
</dbReference>
<dbReference type="RefSeq" id="WP_009872626.1">
    <property type="nucleotide sequence ID" value="NC_007429.1"/>
</dbReference>
<dbReference type="SMR" id="Q3KLV7"/>
<dbReference type="KEGG" id="cta:CTA_0431"/>
<dbReference type="HOGENOM" id="CLU_005965_2_1_0"/>
<dbReference type="Proteomes" id="UP000002532">
    <property type="component" value="Chromosome"/>
</dbReference>
<dbReference type="GO" id="GO:0005524">
    <property type="term" value="F:ATP binding"/>
    <property type="evidence" value="ECO:0007669"/>
    <property type="project" value="UniProtKB-UniRule"/>
</dbReference>
<dbReference type="GO" id="GO:0140662">
    <property type="term" value="F:ATP-dependent protein folding chaperone"/>
    <property type="evidence" value="ECO:0007669"/>
    <property type="project" value="InterPro"/>
</dbReference>
<dbReference type="GO" id="GO:0051082">
    <property type="term" value="F:unfolded protein binding"/>
    <property type="evidence" value="ECO:0007669"/>
    <property type="project" value="InterPro"/>
</dbReference>
<dbReference type="CDD" id="cd10234">
    <property type="entry name" value="ASKHA_NBD_HSP70_DnaK-like"/>
    <property type="match status" value="1"/>
</dbReference>
<dbReference type="FunFam" id="2.60.34.10:FF:000014">
    <property type="entry name" value="Chaperone protein DnaK HSP70"/>
    <property type="match status" value="1"/>
</dbReference>
<dbReference type="FunFam" id="3.30.30.30:FF:000005">
    <property type="entry name" value="Heat shock protein ssb1"/>
    <property type="match status" value="1"/>
</dbReference>
<dbReference type="FunFam" id="1.20.1270.10:FF:000001">
    <property type="entry name" value="Molecular chaperone DnaK"/>
    <property type="match status" value="1"/>
</dbReference>
<dbReference type="FunFam" id="3.30.420.40:FF:000004">
    <property type="entry name" value="Molecular chaperone DnaK"/>
    <property type="match status" value="1"/>
</dbReference>
<dbReference type="FunFam" id="3.90.640.10:FF:000003">
    <property type="entry name" value="Molecular chaperone DnaK"/>
    <property type="match status" value="1"/>
</dbReference>
<dbReference type="Gene3D" id="1.20.1270.10">
    <property type="match status" value="1"/>
</dbReference>
<dbReference type="Gene3D" id="3.30.420.40">
    <property type="match status" value="2"/>
</dbReference>
<dbReference type="Gene3D" id="3.90.640.10">
    <property type="entry name" value="Actin, Chain A, domain 4"/>
    <property type="match status" value="1"/>
</dbReference>
<dbReference type="Gene3D" id="2.60.34.10">
    <property type="entry name" value="Substrate Binding Domain Of DNAk, Chain A, domain 1"/>
    <property type="match status" value="1"/>
</dbReference>
<dbReference type="HAMAP" id="MF_00332">
    <property type="entry name" value="DnaK"/>
    <property type="match status" value="1"/>
</dbReference>
<dbReference type="InterPro" id="IPR043129">
    <property type="entry name" value="ATPase_NBD"/>
</dbReference>
<dbReference type="InterPro" id="IPR012725">
    <property type="entry name" value="Chaperone_DnaK"/>
</dbReference>
<dbReference type="InterPro" id="IPR018181">
    <property type="entry name" value="Heat_shock_70_CS"/>
</dbReference>
<dbReference type="InterPro" id="IPR029048">
    <property type="entry name" value="HSP70_C_sf"/>
</dbReference>
<dbReference type="InterPro" id="IPR029047">
    <property type="entry name" value="HSP70_peptide-bd_sf"/>
</dbReference>
<dbReference type="InterPro" id="IPR013126">
    <property type="entry name" value="Hsp_70_fam"/>
</dbReference>
<dbReference type="NCBIfam" id="NF001413">
    <property type="entry name" value="PRK00290.1"/>
    <property type="match status" value="1"/>
</dbReference>
<dbReference type="NCBIfam" id="TIGR02350">
    <property type="entry name" value="prok_dnaK"/>
    <property type="match status" value="1"/>
</dbReference>
<dbReference type="PANTHER" id="PTHR19375">
    <property type="entry name" value="HEAT SHOCK PROTEIN 70KDA"/>
    <property type="match status" value="1"/>
</dbReference>
<dbReference type="Pfam" id="PF00012">
    <property type="entry name" value="HSP70"/>
    <property type="match status" value="1"/>
</dbReference>
<dbReference type="PRINTS" id="PR00301">
    <property type="entry name" value="HEATSHOCK70"/>
</dbReference>
<dbReference type="SUPFAM" id="SSF53067">
    <property type="entry name" value="Actin-like ATPase domain"/>
    <property type="match status" value="2"/>
</dbReference>
<dbReference type="SUPFAM" id="SSF100934">
    <property type="entry name" value="Heat shock protein 70kD (HSP70), C-terminal subdomain"/>
    <property type="match status" value="1"/>
</dbReference>
<dbReference type="SUPFAM" id="SSF100920">
    <property type="entry name" value="Heat shock protein 70kD (HSP70), peptide-binding domain"/>
    <property type="match status" value="1"/>
</dbReference>
<dbReference type="PROSITE" id="PS00297">
    <property type="entry name" value="HSP70_1"/>
    <property type="match status" value="1"/>
</dbReference>
<dbReference type="PROSITE" id="PS00329">
    <property type="entry name" value="HSP70_2"/>
    <property type="match status" value="1"/>
</dbReference>
<dbReference type="PROSITE" id="PS01036">
    <property type="entry name" value="HSP70_3"/>
    <property type="match status" value="1"/>
</dbReference>
<comment type="function">
    <text evidence="1">Acts as a chaperone.</text>
</comment>
<comment type="induction">
    <text evidence="1">By stress conditions e.g. heat shock.</text>
</comment>
<comment type="similarity">
    <text evidence="1">Belongs to the heat shock protein 70 family.</text>
</comment>
<sequence length="660" mass="70843">MSEKRKSNKIIGIDLGTTNSCVSVMEGGQPKVIASSEGTRTTPSIVAFKGGETLVGIPAKRQAVTNPEKTLASTKRFIGRKFSEVESEIKTVPYKVAPNSKGDAVFDVEQKLYTPEEIGAQILMKMKETAEAYLGETVTEAVITVPAYFNDSQRASTKDAGRIAGLDVKRIIPEPTAAALAYGIDKEGDKKIAVFDLGGGTFDISILEIGDGVFEVLSTNGDTHLGGDDFDGVIINWMLDEFKKQEGIDLSKDNMALQRLKDAAEKAKIELSGVSSTEINQPFITIDANGPKHLALTLTRAQFEHLASSLIERTKQPCAQALKDAKLSASDIDDVLLVGGMSRMPAVQAVVKEIFGKEPNKGVNPDEVVAIGAAIQGGVLGGEVKDVLLLDVIPLSLGIETLGGVMTPLVERNTTIPTQKKQIFSTAADNQPAVTIVVLQGERPMAKDNKEIGRFDLTDIPPAPRGHPQIEVTFDIDANGILHVSAKDAASGREQKIRIEASSGLKEDEIQQMIRDAELHKEEDKQRKEASDVKNEADGMIFRAEKAVKDYHDKIPAELVKEIEEHIEKVRQAIKEDASTTAIKAASDELSTRMQKIGEAMQAQSASAAASSAANAQGGPNINSEDLKKHSFSTRPPAGGSASSTDNIEDADVEIVDKPE</sequence>
<proteinExistence type="inferred from homology"/>
<organism>
    <name type="scientific">Chlamydia trachomatis serovar A (strain ATCC VR-571B / DSM 19440 / HAR-13)</name>
    <dbReference type="NCBI Taxonomy" id="315277"/>
    <lineage>
        <taxon>Bacteria</taxon>
        <taxon>Pseudomonadati</taxon>
        <taxon>Chlamydiota</taxon>
        <taxon>Chlamydiia</taxon>
        <taxon>Chlamydiales</taxon>
        <taxon>Chlamydiaceae</taxon>
        <taxon>Chlamydia/Chlamydophila group</taxon>
        <taxon>Chlamydia</taxon>
    </lineage>
</organism>
<accession>Q3KLV7</accession>